<organism>
    <name type="scientific">Haemophilus influenzae (strain PittGG)</name>
    <dbReference type="NCBI Taxonomy" id="374931"/>
    <lineage>
        <taxon>Bacteria</taxon>
        <taxon>Pseudomonadati</taxon>
        <taxon>Pseudomonadota</taxon>
        <taxon>Gammaproteobacteria</taxon>
        <taxon>Pasteurellales</taxon>
        <taxon>Pasteurellaceae</taxon>
        <taxon>Haemophilus</taxon>
    </lineage>
</organism>
<gene>
    <name evidence="1" type="primary">uxuA</name>
    <name type="ordered locus">CGSHiGG_02775</name>
</gene>
<evidence type="ECO:0000255" key="1">
    <source>
        <dbReference type="HAMAP-Rule" id="MF_00106"/>
    </source>
</evidence>
<sequence length="394" mass="45386">MEQAWRWYGPKDPVSLSDIRQAGATGIVTALHHIPNGEIWRIEEIKKRKTEIENAGLSWSVVESVPVHEEIKTQTGNYQKWINNYKQTLRNLAQCGIDTVCYNFMPVLDWTRTDLAYELPDGSKALRFDHIAFAAFELHILKRPDAEKAYSQEEQVAARTYYDKMSEQDITQLTRNIIAGLPGAEEGYTLDEFQTQLDRYKDISSEKFRTHLAYFLNEIVPVAQEVGIKMAIHPDDPPRPILGLPRIVSTIEDMQWFVETQPLPANGFTMCTGSYGVRSDNDLVKMTEQFADRIYFAHLRSTQREDNPLTFHEAAHLEGDVDMFNMVKALLNEEYRRLNQGETRLIPMRPDHGHQMLDDLRKKTNPGYSAIGRLKGLAEFRGLEMALKKVYFNK</sequence>
<proteinExistence type="inferred from homology"/>
<reference key="1">
    <citation type="journal article" date="2007" name="Genome Biol.">
        <title>Characterization and modeling of the Haemophilus influenzae core and supragenomes based on the complete genomic sequences of Rd and 12 clinical nontypeable strains.</title>
        <authorList>
            <person name="Hogg J.S."/>
            <person name="Hu F.Z."/>
            <person name="Janto B."/>
            <person name="Boissy R."/>
            <person name="Hayes J."/>
            <person name="Keefe R."/>
            <person name="Post J.C."/>
            <person name="Ehrlich G.D."/>
        </authorList>
    </citation>
    <scope>NUCLEOTIDE SEQUENCE [LARGE SCALE GENOMIC DNA]</scope>
    <source>
        <strain>PittGG</strain>
    </source>
</reference>
<name>UXUA_HAEIG</name>
<comment type="function">
    <text evidence="1">Catalyzes the dehydration of D-mannonate.</text>
</comment>
<comment type="catalytic activity">
    <reaction evidence="1">
        <text>D-mannonate = 2-dehydro-3-deoxy-D-gluconate + H2O</text>
        <dbReference type="Rhea" id="RHEA:20097"/>
        <dbReference type="ChEBI" id="CHEBI:15377"/>
        <dbReference type="ChEBI" id="CHEBI:17767"/>
        <dbReference type="ChEBI" id="CHEBI:57990"/>
        <dbReference type="EC" id="4.2.1.8"/>
    </reaction>
</comment>
<comment type="cofactor">
    <cofactor evidence="1">
        <name>Fe(2+)</name>
        <dbReference type="ChEBI" id="CHEBI:29033"/>
    </cofactor>
    <cofactor evidence="1">
        <name>Mn(2+)</name>
        <dbReference type="ChEBI" id="CHEBI:29035"/>
    </cofactor>
</comment>
<comment type="pathway">
    <text evidence="1">Carbohydrate metabolism; pentose and glucuronate interconversion.</text>
</comment>
<comment type="similarity">
    <text evidence="1">Belongs to the mannonate dehydratase family.</text>
</comment>
<accession>A5UFM4</accession>
<protein>
    <recommendedName>
        <fullName evidence="1">Mannonate dehydratase</fullName>
        <ecNumber evidence="1">4.2.1.8</ecNumber>
    </recommendedName>
    <alternativeName>
        <fullName evidence="1">D-mannonate hydro-lyase</fullName>
    </alternativeName>
</protein>
<keyword id="KW-0408">Iron</keyword>
<keyword id="KW-0456">Lyase</keyword>
<keyword id="KW-0464">Manganese</keyword>
<feature type="chain" id="PRO_1000034330" description="Mannonate dehydratase">
    <location>
        <begin position="1"/>
        <end position="394"/>
    </location>
</feature>
<dbReference type="EC" id="4.2.1.8" evidence="1"/>
<dbReference type="EMBL" id="CP000672">
    <property type="protein sequence ID" value="ABQ99579.1"/>
    <property type="molecule type" value="Genomic_DNA"/>
</dbReference>
<dbReference type="SMR" id="A5UFM4"/>
<dbReference type="KEGG" id="hiq:CGSHiGG_02775"/>
<dbReference type="HOGENOM" id="CLU_058621_2_0_6"/>
<dbReference type="UniPathway" id="UPA00246"/>
<dbReference type="Proteomes" id="UP000001990">
    <property type="component" value="Chromosome"/>
</dbReference>
<dbReference type="GO" id="GO:0008198">
    <property type="term" value="F:ferrous iron binding"/>
    <property type="evidence" value="ECO:0007669"/>
    <property type="project" value="TreeGrafter"/>
</dbReference>
<dbReference type="GO" id="GO:0030145">
    <property type="term" value="F:manganese ion binding"/>
    <property type="evidence" value="ECO:0007669"/>
    <property type="project" value="TreeGrafter"/>
</dbReference>
<dbReference type="GO" id="GO:0008927">
    <property type="term" value="F:mannonate dehydratase activity"/>
    <property type="evidence" value="ECO:0007669"/>
    <property type="project" value="UniProtKB-UniRule"/>
</dbReference>
<dbReference type="GO" id="GO:0042840">
    <property type="term" value="P:D-glucuronate catabolic process"/>
    <property type="evidence" value="ECO:0007669"/>
    <property type="project" value="TreeGrafter"/>
</dbReference>
<dbReference type="FunFam" id="3.20.20.150:FF:000004">
    <property type="entry name" value="Mannonate dehydratase"/>
    <property type="match status" value="1"/>
</dbReference>
<dbReference type="FunFam" id="3.20.20.150:FF:000005">
    <property type="entry name" value="Mannonate dehydratase"/>
    <property type="match status" value="1"/>
</dbReference>
<dbReference type="Gene3D" id="3.20.20.150">
    <property type="entry name" value="Divalent-metal-dependent TIM barrel enzymes"/>
    <property type="match status" value="2"/>
</dbReference>
<dbReference type="HAMAP" id="MF_00106">
    <property type="entry name" value="UxuA"/>
    <property type="match status" value="1"/>
</dbReference>
<dbReference type="InterPro" id="IPR004628">
    <property type="entry name" value="Man_deHydtase"/>
</dbReference>
<dbReference type="InterPro" id="IPR036237">
    <property type="entry name" value="Xyl_isomerase-like_sf"/>
</dbReference>
<dbReference type="NCBIfam" id="NF003027">
    <property type="entry name" value="PRK03906.1"/>
    <property type="match status" value="1"/>
</dbReference>
<dbReference type="NCBIfam" id="TIGR00695">
    <property type="entry name" value="uxuA"/>
    <property type="match status" value="1"/>
</dbReference>
<dbReference type="PANTHER" id="PTHR30387">
    <property type="entry name" value="MANNONATE DEHYDRATASE"/>
    <property type="match status" value="1"/>
</dbReference>
<dbReference type="PANTHER" id="PTHR30387:SF2">
    <property type="entry name" value="MANNONATE DEHYDRATASE"/>
    <property type="match status" value="1"/>
</dbReference>
<dbReference type="Pfam" id="PF03786">
    <property type="entry name" value="UxuA"/>
    <property type="match status" value="1"/>
</dbReference>
<dbReference type="PIRSF" id="PIRSF016049">
    <property type="entry name" value="Man_dehyd"/>
    <property type="match status" value="1"/>
</dbReference>
<dbReference type="SUPFAM" id="SSF51658">
    <property type="entry name" value="Xylose isomerase-like"/>
    <property type="match status" value="1"/>
</dbReference>